<protein>
    <recommendedName>
        <fullName evidence="1">Large ribosomal subunit protein bL12</fullName>
    </recommendedName>
    <alternativeName>
        <fullName evidence="2">50S ribosomal protein L7/L12</fullName>
    </alternativeName>
</protein>
<feature type="chain" id="PRO_1000121455" description="Large ribosomal subunit protein bL12">
    <location>
        <begin position="1"/>
        <end position="124"/>
    </location>
</feature>
<accession>B1Y7H4</accession>
<dbReference type="EMBL" id="CP001013">
    <property type="protein sequence ID" value="ACB36122.1"/>
    <property type="molecule type" value="Genomic_DNA"/>
</dbReference>
<dbReference type="RefSeq" id="WP_012348869.1">
    <property type="nucleotide sequence ID" value="NC_010524.1"/>
</dbReference>
<dbReference type="SMR" id="B1Y7H4"/>
<dbReference type="STRING" id="395495.Lcho_3868"/>
<dbReference type="KEGG" id="lch:Lcho_3868"/>
<dbReference type="eggNOG" id="COG0222">
    <property type="taxonomic scope" value="Bacteria"/>
</dbReference>
<dbReference type="HOGENOM" id="CLU_086499_3_2_4"/>
<dbReference type="OrthoDB" id="9811748at2"/>
<dbReference type="Proteomes" id="UP000001693">
    <property type="component" value="Chromosome"/>
</dbReference>
<dbReference type="GO" id="GO:0022625">
    <property type="term" value="C:cytosolic large ribosomal subunit"/>
    <property type="evidence" value="ECO:0007669"/>
    <property type="project" value="TreeGrafter"/>
</dbReference>
<dbReference type="GO" id="GO:0003729">
    <property type="term" value="F:mRNA binding"/>
    <property type="evidence" value="ECO:0007669"/>
    <property type="project" value="TreeGrafter"/>
</dbReference>
<dbReference type="GO" id="GO:0003735">
    <property type="term" value="F:structural constituent of ribosome"/>
    <property type="evidence" value="ECO:0007669"/>
    <property type="project" value="InterPro"/>
</dbReference>
<dbReference type="GO" id="GO:0006412">
    <property type="term" value="P:translation"/>
    <property type="evidence" value="ECO:0007669"/>
    <property type="project" value="UniProtKB-UniRule"/>
</dbReference>
<dbReference type="CDD" id="cd00387">
    <property type="entry name" value="Ribosomal_L7_L12"/>
    <property type="match status" value="1"/>
</dbReference>
<dbReference type="FunFam" id="3.30.1390.10:FF:000001">
    <property type="entry name" value="50S ribosomal protein L7/L12"/>
    <property type="match status" value="1"/>
</dbReference>
<dbReference type="Gene3D" id="3.30.1390.10">
    <property type="match status" value="1"/>
</dbReference>
<dbReference type="Gene3D" id="1.20.5.710">
    <property type="entry name" value="Single helix bin"/>
    <property type="match status" value="1"/>
</dbReference>
<dbReference type="HAMAP" id="MF_00368">
    <property type="entry name" value="Ribosomal_bL12"/>
    <property type="match status" value="1"/>
</dbReference>
<dbReference type="InterPro" id="IPR000206">
    <property type="entry name" value="Ribosomal_bL12"/>
</dbReference>
<dbReference type="InterPro" id="IPR013823">
    <property type="entry name" value="Ribosomal_bL12_C"/>
</dbReference>
<dbReference type="InterPro" id="IPR014719">
    <property type="entry name" value="Ribosomal_bL12_C/ClpS-like"/>
</dbReference>
<dbReference type="InterPro" id="IPR008932">
    <property type="entry name" value="Ribosomal_bL12_oligo"/>
</dbReference>
<dbReference type="InterPro" id="IPR036235">
    <property type="entry name" value="Ribosomal_bL12_oligo_N_sf"/>
</dbReference>
<dbReference type="NCBIfam" id="TIGR00855">
    <property type="entry name" value="L12"/>
    <property type="match status" value="1"/>
</dbReference>
<dbReference type="PANTHER" id="PTHR45987">
    <property type="entry name" value="39S RIBOSOMAL PROTEIN L12"/>
    <property type="match status" value="1"/>
</dbReference>
<dbReference type="PANTHER" id="PTHR45987:SF4">
    <property type="entry name" value="LARGE RIBOSOMAL SUBUNIT PROTEIN BL12M"/>
    <property type="match status" value="1"/>
</dbReference>
<dbReference type="Pfam" id="PF00542">
    <property type="entry name" value="Ribosomal_L12"/>
    <property type="match status" value="1"/>
</dbReference>
<dbReference type="Pfam" id="PF16320">
    <property type="entry name" value="Ribosomal_L12_N"/>
    <property type="match status" value="1"/>
</dbReference>
<dbReference type="SUPFAM" id="SSF54736">
    <property type="entry name" value="ClpS-like"/>
    <property type="match status" value="1"/>
</dbReference>
<dbReference type="SUPFAM" id="SSF48300">
    <property type="entry name" value="Ribosomal protein L7/12, oligomerisation (N-terminal) domain"/>
    <property type="match status" value="1"/>
</dbReference>
<name>RL7_LEPCP</name>
<reference key="1">
    <citation type="submission" date="2008-03" db="EMBL/GenBank/DDBJ databases">
        <title>Complete sequence of Leptothrix cholodnii SP-6.</title>
        <authorList>
            <consortium name="US DOE Joint Genome Institute"/>
            <person name="Copeland A."/>
            <person name="Lucas S."/>
            <person name="Lapidus A."/>
            <person name="Glavina del Rio T."/>
            <person name="Dalin E."/>
            <person name="Tice H."/>
            <person name="Bruce D."/>
            <person name="Goodwin L."/>
            <person name="Pitluck S."/>
            <person name="Chertkov O."/>
            <person name="Brettin T."/>
            <person name="Detter J.C."/>
            <person name="Han C."/>
            <person name="Kuske C.R."/>
            <person name="Schmutz J."/>
            <person name="Larimer F."/>
            <person name="Land M."/>
            <person name="Hauser L."/>
            <person name="Kyrpides N."/>
            <person name="Lykidis A."/>
            <person name="Emerson D."/>
            <person name="Richardson P."/>
        </authorList>
    </citation>
    <scope>NUCLEOTIDE SEQUENCE [LARGE SCALE GENOMIC DNA]</scope>
    <source>
        <strain>ATCC 51168 / LMG 8142 / SP-6</strain>
    </source>
</reference>
<evidence type="ECO:0000255" key="1">
    <source>
        <dbReference type="HAMAP-Rule" id="MF_00368"/>
    </source>
</evidence>
<evidence type="ECO:0000305" key="2"/>
<gene>
    <name evidence="1" type="primary">rplL</name>
    <name type="ordered locus">Lcho_3868</name>
</gene>
<proteinExistence type="inferred from homology"/>
<comment type="function">
    <text evidence="1">Forms part of the ribosomal stalk which helps the ribosome interact with GTP-bound translation factors. Is thus essential for accurate translation.</text>
</comment>
<comment type="subunit">
    <text evidence="1">Homodimer. Part of the ribosomal stalk of the 50S ribosomal subunit. Forms a multimeric L10(L12)X complex, where L10 forms an elongated spine to which 2 to 4 L12 dimers bind in a sequential fashion. Binds GTP-bound translation factors.</text>
</comment>
<comment type="similarity">
    <text evidence="1">Belongs to the bacterial ribosomal protein bL12 family.</text>
</comment>
<organism>
    <name type="scientific">Leptothrix cholodnii (strain ATCC 51168 / LMG 8142 / SP-6)</name>
    <name type="common">Leptothrix discophora (strain SP-6)</name>
    <dbReference type="NCBI Taxonomy" id="395495"/>
    <lineage>
        <taxon>Bacteria</taxon>
        <taxon>Pseudomonadati</taxon>
        <taxon>Pseudomonadota</taxon>
        <taxon>Betaproteobacteria</taxon>
        <taxon>Burkholderiales</taxon>
        <taxon>Sphaerotilaceae</taxon>
        <taxon>Leptothrix</taxon>
    </lineage>
</organism>
<keyword id="KW-1185">Reference proteome</keyword>
<keyword id="KW-0687">Ribonucleoprotein</keyword>
<keyword id="KW-0689">Ribosomal protein</keyword>
<sequence length="124" mass="12667">MAFDKDAFLTALDSMTVLELNDLVKAIEEKFGVSAAAMAAPGAGAGAAAAVVEEKTEFNVVLLDAGAQKVSVIKAVRELTGLGLKEAKDLVDGAPKNVKEGIAKADAEAALKKLLEAGAKAEIK</sequence>